<reference key="1">
    <citation type="journal article" date="2007" name="PLoS ONE">
        <title>Analysis of the neurotoxin complex genes in Clostridium botulinum A1-A4 and B1 strains: BoNT/A3, /Ba4 and /B1 clusters are located within plasmids.</title>
        <authorList>
            <person name="Smith T.J."/>
            <person name="Hill K.K."/>
            <person name="Foley B.T."/>
            <person name="Detter J.C."/>
            <person name="Munk A.C."/>
            <person name="Bruce D.C."/>
            <person name="Doggett N.A."/>
            <person name="Smith L.A."/>
            <person name="Marks J.D."/>
            <person name="Xie G."/>
            <person name="Brettin T.S."/>
        </authorList>
    </citation>
    <scope>NUCLEOTIDE SEQUENCE [LARGE SCALE GENOMIC DNA]</scope>
    <source>
        <strain>Loch Maree / Type A3</strain>
    </source>
</reference>
<dbReference type="EC" id="2.1.3.3" evidence="2"/>
<dbReference type="EMBL" id="CP000962">
    <property type="protein sequence ID" value="ACA56830.1"/>
    <property type="molecule type" value="Genomic_DNA"/>
</dbReference>
<dbReference type="RefSeq" id="WP_012100476.1">
    <property type="nucleotide sequence ID" value="NC_010520.1"/>
</dbReference>
<dbReference type="SMR" id="B1KXQ3"/>
<dbReference type="KEGG" id="cbl:CLK_1978"/>
<dbReference type="HOGENOM" id="CLU_043846_3_1_9"/>
<dbReference type="UniPathway" id="UPA00254">
    <property type="reaction ID" value="UER00365"/>
</dbReference>
<dbReference type="GO" id="GO:0005737">
    <property type="term" value="C:cytoplasm"/>
    <property type="evidence" value="ECO:0007669"/>
    <property type="project" value="UniProtKB-SubCell"/>
</dbReference>
<dbReference type="GO" id="GO:0016597">
    <property type="term" value="F:amino acid binding"/>
    <property type="evidence" value="ECO:0007669"/>
    <property type="project" value="InterPro"/>
</dbReference>
<dbReference type="GO" id="GO:0004585">
    <property type="term" value="F:ornithine carbamoyltransferase activity"/>
    <property type="evidence" value="ECO:0007669"/>
    <property type="project" value="UniProtKB-UniRule"/>
</dbReference>
<dbReference type="GO" id="GO:0042450">
    <property type="term" value="P:arginine biosynthetic process via ornithine"/>
    <property type="evidence" value="ECO:0007669"/>
    <property type="project" value="TreeGrafter"/>
</dbReference>
<dbReference type="GO" id="GO:0019547">
    <property type="term" value="P:arginine catabolic process to ornithine"/>
    <property type="evidence" value="ECO:0007669"/>
    <property type="project" value="UniProtKB-UniRule"/>
</dbReference>
<dbReference type="GO" id="GO:0019240">
    <property type="term" value="P:citrulline biosynthetic process"/>
    <property type="evidence" value="ECO:0007669"/>
    <property type="project" value="TreeGrafter"/>
</dbReference>
<dbReference type="FunFam" id="3.40.50.1370:FF:000004">
    <property type="entry name" value="Ornithine carbamoyltransferase"/>
    <property type="match status" value="1"/>
</dbReference>
<dbReference type="Gene3D" id="3.40.50.1370">
    <property type="entry name" value="Aspartate/ornithine carbamoyltransferase"/>
    <property type="match status" value="2"/>
</dbReference>
<dbReference type="HAMAP" id="MF_01109">
    <property type="entry name" value="OTCase"/>
    <property type="match status" value="1"/>
</dbReference>
<dbReference type="InterPro" id="IPR006132">
    <property type="entry name" value="Asp/Orn_carbamoyltranf_P-bd"/>
</dbReference>
<dbReference type="InterPro" id="IPR006130">
    <property type="entry name" value="Asp/Orn_carbamoylTrfase"/>
</dbReference>
<dbReference type="InterPro" id="IPR036901">
    <property type="entry name" value="Asp/Orn_carbamoylTrfase_sf"/>
</dbReference>
<dbReference type="InterPro" id="IPR006131">
    <property type="entry name" value="Asp_carbamoyltransf_Asp/Orn-bd"/>
</dbReference>
<dbReference type="InterPro" id="IPR002292">
    <property type="entry name" value="Orn/put_carbamltrans"/>
</dbReference>
<dbReference type="InterPro" id="IPR024904">
    <property type="entry name" value="OTCase_ArgI"/>
</dbReference>
<dbReference type="NCBIfam" id="TIGR00658">
    <property type="entry name" value="orni_carb_tr"/>
    <property type="match status" value="1"/>
</dbReference>
<dbReference type="NCBIfam" id="NF003286">
    <property type="entry name" value="PRK04284.1"/>
    <property type="match status" value="1"/>
</dbReference>
<dbReference type="PANTHER" id="PTHR45753:SF2">
    <property type="entry name" value="ORNITHINE CARBAMOYLTRANSFERASE"/>
    <property type="match status" value="1"/>
</dbReference>
<dbReference type="PANTHER" id="PTHR45753">
    <property type="entry name" value="ORNITHINE CARBAMOYLTRANSFERASE, MITOCHONDRIAL"/>
    <property type="match status" value="1"/>
</dbReference>
<dbReference type="Pfam" id="PF00185">
    <property type="entry name" value="OTCace"/>
    <property type="match status" value="1"/>
</dbReference>
<dbReference type="Pfam" id="PF02729">
    <property type="entry name" value="OTCace_N"/>
    <property type="match status" value="1"/>
</dbReference>
<dbReference type="PRINTS" id="PR00100">
    <property type="entry name" value="AOTCASE"/>
</dbReference>
<dbReference type="PRINTS" id="PR00102">
    <property type="entry name" value="OTCASE"/>
</dbReference>
<dbReference type="SUPFAM" id="SSF53671">
    <property type="entry name" value="Aspartate/ornithine carbamoyltransferase"/>
    <property type="match status" value="1"/>
</dbReference>
<dbReference type="PROSITE" id="PS00097">
    <property type="entry name" value="CARBAMOYLTRANSFERASE"/>
    <property type="match status" value="1"/>
</dbReference>
<sequence>MFNLKNRNFLTLMDFTPKEINYFLDLARDLKRAKYTGTEVQRMKGKNIALIFEKASTRTRCAFEVGAKDQGAHVTYLGPTGSHIGKKESAADTARVLGRMYDGIEYRGFGQEIVETLAEYAGVPVWNGLTDEDHPTQILADFLTIREHFNKPLSEIKFAYVGDGANNMANALMIGAVKMGMDFRIVSPKEIPTDATLVAKCKEIAAETGAKVTITDNIEEGVKGCDVLYTDVWVSMGEPDSVWESKIKLLTPYRVDMNMIKMTGNPDAKFMHCLPAFHDEETAVGKEIKEKYGLSEMEVSHELFESKYSIVFDEAENRMHTIKAVMVATLGDQ</sequence>
<keyword id="KW-0056">Arginine metabolism</keyword>
<keyword id="KW-0963">Cytoplasm</keyword>
<keyword id="KW-0808">Transferase</keyword>
<evidence type="ECO:0000250" key="1"/>
<evidence type="ECO:0000255" key="2">
    <source>
        <dbReference type="HAMAP-Rule" id="MF_01109"/>
    </source>
</evidence>
<organism>
    <name type="scientific">Clostridium botulinum (strain Loch Maree / Type A3)</name>
    <dbReference type="NCBI Taxonomy" id="498214"/>
    <lineage>
        <taxon>Bacteria</taxon>
        <taxon>Bacillati</taxon>
        <taxon>Bacillota</taxon>
        <taxon>Clostridia</taxon>
        <taxon>Eubacteriales</taxon>
        <taxon>Clostridiaceae</taxon>
        <taxon>Clostridium</taxon>
    </lineage>
</organism>
<protein>
    <recommendedName>
        <fullName evidence="2">Ornithine carbamoyltransferase</fullName>
        <shortName evidence="2">OTCase</shortName>
        <ecNumber evidence="2">2.1.3.3</ecNumber>
    </recommendedName>
</protein>
<comment type="function">
    <text evidence="1">Reversibly catalyzes the transfer of the carbamoyl group from carbamoyl phosphate (CP) to the N(epsilon) atom of ornithine (ORN) to produce L-citrulline.</text>
</comment>
<comment type="catalytic activity">
    <reaction evidence="2">
        <text>carbamoyl phosphate + L-ornithine = L-citrulline + phosphate + H(+)</text>
        <dbReference type="Rhea" id="RHEA:19513"/>
        <dbReference type="ChEBI" id="CHEBI:15378"/>
        <dbReference type="ChEBI" id="CHEBI:43474"/>
        <dbReference type="ChEBI" id="CHEBI:46911"/>
        <dbReference type="ChEBI" id="CHEBI:57743"/>
        <dbReference type="ChEBI" id="CHEBI:58228"/>
        <dbReference type="EC" id="2.1.3.3"/>
    </reaction>
</comment>
<comment type="pathway">
    <text evidence="2">Amino-acid degradation; L-arginine degradation via ADI pathway; carbamoyl phosphate from L-arginine: step 2/2.</text>
</comment>
<comment type="subcellular location">
    <subcellularLocation>
        <location evidence="2">Cytoplasm</location>
    </subcellularLocation>
</comment>
<comment type="similarity">
    <text evidence="2">Belongs to the aspartate/ornithine carbamoyltransferase superfamily. OTCase family.</text>
</comment>
<name>OTC_CLOBM</name>
<accession>B1KXQ3</accession>
<gene>
    <name evidence="2" type="primary">arcB</name>
    <name type="ordered locus">CLK_1978</name>
</gene>
<proteinExistence type="inferred from homology"/>
<feature type="chain" id="PRO_1000137092" description="Ornithine carbamoyltransferase">
    <location>
        <begin position="1"/>
        <end position="333"/>
    </location>
</feature>
<feature type="binding site" evidence="2">
    <location>
        <begin position="56"/>
        <end position="59"/>
    </location>
    <ligand>
        <name>carbamoyl phosphate</name>
        <dbReference type="ChEBI" id="CHEBI:58228"/>
    </ligand>
</feature>
<feature type="binding site" evidence="2">
    <location>
        <position position="107"/>
    </location>
    <ligand>
        <name>carbamoyl phosphate</name>
        <dbReference type="ChEBI" id="CHEBI:58228"/>
    </ligand>
</feature>
<feature type="binding site" evidence="2">
    <location>
        <begin position="134"/>
        <end position="137"/>
    </location>
    <ligand>
        <name>carbamoyl phosphate</name>
        <dbReference type="ChEBI" id="CHEBI:58228"/>
    </ligand>
</feature>
<feature type="binding site" evidence="2">
    <location>
        <position position="167"/>
    </location>
    <ligand>
        <name>L-ornithine</name>
        <dbReference type="ChEBI" id="CHEBI:46911"/>
    </ligand>
</feature>
<feature type="binding site" evidence="2">
    <location>
        <position position="231"/>
    </location>
    <ligand>
        <name>L-ornithine</name>
        <dbReference type="ChEBI" id="CHEBI:46911"/>
    </ligand>
</feature>
<feature type="binding site" evidence="2">
    <location>
        <begin position="235"/>
        <end position="236"/>
    </location>
    <ligand>
        <name>L-ornithine</name>
        <dbReference type="ChEBI" id="CHEBI:46911"/>
    </ligand>
</feature>
<feature type="binding site" evidence="2">
    <location>
        <begin position="273"/>
        <end position="274"/>
    </location>
    <ligand>
        <name>carbamoyl phosphate</name>
        <dbReference type="ChEBI" id="CHEBI:58228"/>
    </ligand>
</feature>
<feature type="binding site" evidence="2">
    <location>
        <position position="318"/>
    </location>
    <ligand>
        <name>carbamoyl phosphate</name>
        <dbReference type="ChEBI" id="CHEBI:58228"/>
    </ligand>
</feature>